<organism>
    <name type="scientific">Nitratidesulfovibrio vulgaris (strain DP4)</name>
    <name type="common">Desulfovibrio vulgaris</name>
    <dbReference type="NCBI Taxonomy" id="391774"/>
    <lineage>
        <taxon>Bacteria</taxon>
        <taxon>Pseudomonadati</taxon>
        <taxon>Thermodesulfobacteriota</taxon>
        <taxon>Desulfovibrionia</taxon>
        <taxon>Desulfovibrionales</taxon>
        <taxon>Desulfovibrionaceae</taxon>
        <taxon>Nitratidesulfovibrio</taxon>
    </lineage>
</organism>
<reference key="1">
    <citation type="journal article" date="2009" name="Environ. Microbiol.">
        <title>Contribution of mobile genetic elements to Desulfovibrio vulgaris genome plasticity.</title>
        <authorList>
            <person name="Walker C.B."/>
            <person name="Stolyar S."/>
            <person name="Chivian D."/>
            <person name="Pinel N."/>
            <person name="Gabster J.A."/>
            <person name="Dehal P.S."/>
            <person name="He Z."/>
            <person name="Yang Z.K."/>
            <person name="Yen H.C."/>
            <person name="Zhou J."/>
            <person name="Wall J.D."/>
            <person name="Hazen T.C."/>
            <person name="Arkin A.P."/>
            <person name="Stahl D.A."/>
        </authorList>
    </citation>
    <scope>NUCLEOTIDE SEQUENCE [LARGE SCALE GENOMIC DNA]</scope>
    <source>
        <strain>DP4</strain>
    </source>
</reference>
<feature type="chain" id="PRO_1000067939" description="Small ribosomal subunit protein uS14">
    <location>
        <begin position="1"/>
        <end position="61"/>
    </location>
</feature>
<feature type="binding site" evidence="1">
    <location>
        <position position="24"/>
    </location>
    <ligand>
        <name>Zn(2+)</name>
        <dbReference type="ChEBI" id="CHEBI:29105"/>
    </ligand>
</feature>
<feature type="binding site" evidence="1">
    <location>
        <position position="27"/>
    </location>
    <ligand>
        <name>Zn(2+)</name>
        <dbReference type="ChEBI" id="CHEBI:29105"/>
    </ligand>
</feature>
<feature type="binding site" evidence="1">
    <location>
        <position position="40"/>
    </location>
    <ligand>
        <name>Zn(2+)</name>
        <dbReference type="ChEBI" id="CHEBI:29105"/>
    </ligand>
</feature>
<feature type="binding site" evidence="1">
    <location>
        <position position="43"/>
    </location>
    <ligand>
        <name>Zn(2+)</name>
        <dbReference type="ChEBI" id="CHEBI:29105"/>
    </ligand>
</feature>
<proteinExistence type="inferred from homology"/>
<name>RS14Z_NITV4</name>
<comment type="function">
    <text evidence="1">Binds 16S rRNA, required for the assembly of 30S particles and may also be responsible for determining the conformation of the 16S rRNA at the A site.</text>
</comment>
<comment type="cofactor">
    <cofactor evidence="1">
        <name>Zn(2+)</name>
        <dbReference type="ChEBI" id="CHEBI:29105"/>
    </cofactor>
    <text evidence="1">Binds 1 zinc ion per subunit.</text>
</comment>
<comment type="subunit">
    <text evidence="1">Part of the 30S ribosomal subunit. Contacts proteins S3 and S10.</text>
</comment>
<comment type="similarity">
    <text evidence="1">Belongs to the universal ribosomal protein uS14 family. Zinc-binding uS14 subfamily.</text>
</comment>
<keyword id="KW-0479">Metal-binding</keyword>
<keyword id="KW-0687">Ribonucleoprotein</keyword>
<keyword id="KW-0689">Ribosomal protein</keyword>
<keyword id="KW-0694">RNA-binding</keyword>
<keyword id="KW-0699">rRNA-binding</keyword>
<keyword id="KW-0862">Zinc</keyword>
<sequence>MSRTSLEVKAQRKPKFSARAYNRCPICGRPRAYLRKFGLCRICFRNMALRGELPGVRKSSW</sequence>
<evidence type="ECO:0000255" key="1">
    <source>
        <dbReference type="HAMAP-Rule" id="MF_01364"/>
    </source>
</evidence>
<evidence type="ECO:0000305" key="2"/>
<dbReference type="EMBL" id="CP000527">
    <property type="protein sequence ID" value="ABM28769.1"/>
    <property type="molecule type" value="Genomic_DNA"/>
</dbReference>
<dbReference type="RefSeq" id="WP_010938611.1">
    <property type="nucleotide sequence ID" value="NC_008751.1"/>
</dbReference>
<dbReference type="SMR" id="A1VEA3"/>
<dbReference type="KEGG" id="dvl:Dvul_1752"/>
<dbReference type="HOGENOM" id="CLU_139869_3_0_7"/>
<dbReference type="Proteomes" id="UP000009173">
    <property type="component" value="Chromosome"/>
</dbReference>
<dbReference type="GO" id="GO:0005737">
    <property type="term" value="C:cytoplasm"/>
    <property type="evidence" value="ECO:0007669"/>
    <property type="project" value="UniProtKB-ARBA"/>
</dbReference>
<dbReference type="GO" id="GO:0015935">
    <property type="term" value="C:small ribosomal subunit"/>
    <property type="evidence" value="ECO:0007669"/>
    <property type="project" value="TreeGrafter"/>
</dbReference>
<dbReference type="GO" id="GO:0019843">
    <property type="term" value="F:rRNA binding"/>
    <property type="evidence" value="ECO:0007669"/>
    <property type="project" value="UniProtKB-UniRule"/>
</dbReference>
<dbReference type="GO" id="GO:0003735">
    <property type="term" value="F:structural constituent of ribosome"/>
    <property type="evidence" value="ECO:0007669"/>
    <property type="project" value="InterPro"/>
</dbReference>
<dbReference type="GO" id="GO:0008270">
    <property type="term" value="F:zinc ion binding"/>
    <property type="evidence" value="ECO:0007669"/>
    <property type="project" value="UniProtKB-UniRule"/>
</dbReference>
<dbReference type="GO" id="GO:0006412">
    <property type="term" value="P:translation"/>
    <property type="evidence" value="ECO:0007669"/>
    <property type="project" value="UniProtKB-UniRule"/>
</dbReference>
<dbReference type="FunFam" id="4.10.830.10:FF:000001">
    <property type="entry name" value="30S ribosomal protein S14 type Z"/>
    <property type="match status" value="1"/>
</dbReference>
<dbReference type="Gene3D" id="4.10.830.10">
    <property type="entry name" value="30s Ribosomal Protein S14, Chain N"/>
    <property type="match status" value="1"/>
</dbReference>
<dbReference type="HAMAP" id="MF_01364_B">
    <property type="entry name" value="Ribosomal_uS14_2_B"/>
    <property type="match status" value="1"/>
</dbReference>
<dbReference type="InterPro" id="IPR001209">
    <property type="entry name" value="Ribosomal_uS14"/>
</dbReference>
<dbReference type="InterPro" id="IPR023053">
    <property type="entry name" value="Ribosomal_uS14_bact"/>
</dbReference>
<dbReference type="InterPro" id="IPR018271">
    <property type="entry name" value="Ribosomal_uS14_CS"/>
</dbReference>
<dbReference type="InterPro" id="IPR043140">
    <property type="entry name" value="Ribosomal_uS14_sf"/>
</dbReference>
<dbReference type="NCBIfam" id="NF005974">
    <property type="entry name" value="PRK08061.1"/>
    <property type="match status" value="1"/>
</dbReference>
<dbReference type="PANTHER" id="PTHR19836">
    <property type="entry name" value="30S RIBOSOMAL PROTEIN S14"/>
    <property type="match status" value="1"/>
</dbReference>
<dbReference type="PANTHER" id="PTHR19836:SF19">
    <property type="entry name" value="SMALL RIBOSOMAL SUBUNIT PROTEIN US14M"/>
    <property type="match status" value="1"/>
</dbReference>
<dbReference type="Pfam" id="PF00253">
    <property type="entry name" value="Ribosomal_S14"/>
    <property type="match status" value="1"/>
</dbReference>
<dbReference type="SUPFAM" id="SSF57716">
    <property type="entry name" value="Glucocorticoid receptor-like (DNA-binding domain)"/>
    <property type="match status" value="1"/>
</dbReference>
<dbReference type="PROSITE" id="PS00527">
    <property type="entry name" value="RIBOSOMAL_S14"/>
    <property type="match status" value="1"/>
</dbReference>
<accession>A1VEA3</accession>
<protein>
    <recommendedName>
        <fullName evidence="1">Small ribosomal subunit protein uS14</fullName>
    </recommendedName>
    <alternativeName>
        <fullName evidence="2">30S ribosomal protein S14 type Z</fullName>
    </alternativeName>
</protein>
<gene>
    <name evidence="1" type="primary">rpsZ</name>
    <name evidence="1" type="synonym">rpsN</name>
    <name type="ordered locus">Dvul_1752</name>
</gene>